<reference key="1">
    <citation type="journal article" date="1997" name="Nature">
        <title>The complete genome sequence of the Gram-positive bacterium Bacillus subtilis.</title>
        <authorList>
            <person name="Kunst F."/>
            <person name="Ogasawara N."/>
            <person name="Moszer I."/>
            <person name="Albertini A.M."/>
            <person name="Alloni G."/>
            <person name="Azevedo V."/>
            <person name="Bertero M.G."/>
            <person name="Bessieres P."/>
            <person name="Bolotin A."/>
            <person name="Borchert S."/>
            <person name="Borriss R."/>
            <person name="Boursier L."/>
            <person name="Brans A."/>
            <person name="Braun M."/>
            <person name="Brignell S.C."/>
            <person name="Bron S."/>
            <person name="Brouillet S."/>
            <person name="Bruschi C.V."/>
            <person name="Caldwell B."/>
            <person name="Capuano V."/>
            <person name="Carter N.M."/>
            <person name="Choi S.-K."/>
            <person name="Codani J.-J."/>
            <person name="Connerton I.F."/>
            <person name="Cummings N.J."/>
            <person name="Daniel R.A."/>
            <person name="Denizot F."/>
            <person name="Devine K.M."/>
            <person name="Duesterhoeft A."/>
            <person name="Ehrlich S.D."/>
            <person name="Emmerson P.T."/>
            <person name="Entian K.-D."/>
            <person name="Errington J."/>
            <person name="Fabret C."/>
            <person name="Ferrari E."/>
            <person name="Foulger D."/>
            <person name="Fritz C."/>
            <person name="Fujita M."/>
            <person name="Fujita Y."/>
            <person name="Fuma S."/>
            <person name="Galizzi A."/>
            <person name="Galleron N."/>
            <person name="Ghim S.-Y."/>
            <person name="Glaser P."/>
            <person name="Goffeau A."/>
            <person name="Golightly E.J."/>
            <person name="Grandi G."/>
            <person name="Guiseppi G."/>
            <person name="Guy B.J."/>
            <person name="Haga K."/>
            <person name="Haiech J."/>
            <person name="Harwood C.R."/>
            <person name="Henaut A."/>
            <person name="Hilbert H."/>
            <person name="Holsappel S."/>
            <person name="Hosono S."/>
            <person name="Hullo M.-F."/>
            <person name="Itaya M."/>
            <person name="Jones L.-M."/>
            <person name="Joris B."/>
            <person name="Karamata D."/>
            <person name="Kasahara Y."/>
            <person name="Klaerr-Blanchard M."/>
            <person name="Klein C."/>
            <person name="Kobayashi Y."/>
            <person name="Koetter P."/>
            <person name="Koningstein G."/>
            <person name="Krogh S."/>
            <person name="Kumano M."/>
            <person name="Kurita K."/>
            <person name="Lapidus A."/>
            <person name="Lardinois S."/>
            <person name="Lauber J."/>
            <person name="Lazarevic V."/>
            <person name="Lee S.-M."/>
            <person name="Levine A."/>
            <person name="Liu H."/>
            <person name="Masuda S."/>
            <person name="Mauel C."/>
            <person name="Medigue C."/>
            <person name="Medina N."/>
            <person name="Mellado R.P."/>
            <person name="Mizuno M."/>
            <person name="Moestl D."/>
            <person name="Nakai S."/>
            <person name="Noback M."/>
            <person name="Noone D."/>
            <person name="O'Reilly M."/>
            <person name="Ogawa K."/>
            <person name="Ogiwara A."/>
            <person name="Oudega B."/>
            <person name="Park S.-H."/>
            <person name="Parro V."/>
            <person name="Pohl T.M."/>
            <person name="Portetelle D."/>
            <person name="Porwollik S."/>
            <person name="Prescott A.M."/>
            <person name="Presecan E."/>
            <person name="Pujic P."/>
            <person name="Purnelle B."/>
            <person name="Rapoport G."/>
            <person name="Rey M."/>
            <person name="Reynolds S."/>
            <person name="Rieger M."/>
            <person name="Rivolta C."/>
            <person name="Rocha E."/>
            <person name="Roche B."/>
            <person name="Rose M."/>
            <person name="Sadaie Y."/>
            <person name="Sato T."/>
            <person name="Scanlan E."/>
            <person name="Schleich S."/>
            <person name="Schroeter R."/>
            <person name="Scoffone F."/>
            <person name="Sekiguchi J."/>
            <person name="Sekowska A."/>
            <person name="Seror S.J."/>
            <person name="Serror P."/>
            <person name="Shin B.-S."/>
            <person name="Soldo B."/>
            <person name="Sorokin A."/>
            <person name="Tacconi E."/>
            <person name="Takagi T."/>
            <person name="Takahashi H."/>
            <person name="Takemaru K."/>
            <person name="Takeuchi M."/>
            <person name="Tamakoshi A."/>
            <person name="Tanaka T."/>
            <person name="Terpstra P."/>
            <person name="Tognoni A."/>
            <person name="Tosato V."/>
            <person name="Uchiyama S."/>
            <person name="Vandenbol M."/>
            <person name="Vannier F."/>
            <person name="Vassarotti A."/>
            <person name="Viari A."/>
            <person name="Wambutt R."/>
            <person name="Wedler E."/>
            <person name="Wedler H."/>
            <person name="Weitzenegger T."/>
            <person name="Winters P."/>
            <person name="Wipat A."/>
            <person name="Yamamoto H."/>
            <person name="Yamane K."/>
            <person name="Yasumoto K."/>
            <person name="Yata K."/>
            <person name="Yoshida K."/>
            <person name="Yoshikawa H.-F."/>
            <person name="Zumstein E."/>
            <person name="Yoshikawa H."/>
            <person name="Danchin A."/>
        </authorList>
    </citation>
    <scope>NUCLEOTIDE SEQUENCE [LARGE SCALE GENOMIC DNA]</scope>
    <source>
        <strain>168</strain>
    </source>
</reference>
<reference key="2">
    <citation type="journal article" date="2009" name="Microbiology">
        <title>From a consortium sequence to a unified sequence: the Bacillus subtilis 168 reference genome a decade later.</title>
        <authorList>
            <person name="Barbe V."/>
            <person name="Cruveiller S."/>
            <person name="Kunst F."/>
            <person name="Lenoble P."/>
            <person name="Meurice G."/>
            <person name="Sekowska A."/>
            <person name="Vallenet D."/>
            <person name="Wang T."/>
            <person name="Moszer I."/>
            <person name="Medigue C."/>
            <person name="Danchin A."/>
        </authorList>
    </citation>
    <scope>SEQUENCE REVISION TO 136</scope>
</reference>
<gene>
    <name type="primary">yopR</name>
    <name type="ordered locus">BSU20790</name>
</gene>
<organism>
    <name type="scientific">Bacillus subtilis (strain 168)</name>
    <dbReference type="NCBI Taxonomy" id="224308"/>
    <lineage>
        <taxon>Bacteria</taxon>
        <taxon>Bacillati</taxon>
        <taxon>Bacillota</taxon>
        <taxon>Bacilli</taxon>
        <taxon>Bacillales</taxon>
        <taxon>Bacillaceae</taxon>
        <taxon>Bacillus</taxon>
    </lineage>
</organism>
<proteinExistence type="evidence at protein level"/>
<name>YOPR_BACSU</name>
<evidence type="ECO:0007829" key="1">
    <source>
        <dbReference type="PDB" id="8A0A"/>
    </source>
</evidence>
<evidence type="ECO:0007829" key="2">
    <source>
        <dbReference type="PDB" id="8BJV"/>
    </source>
</evidence>
<evidence type="ECO:0007829" key="3">
    <source>
        <dbReference type="PDB" id="8BPZ"/>
    </source>
</evidence>
<accession>O34558</accession>
<keyword id="KW-0002">3D-structure</keyword>
<keyword id="KW-1185">Reference proteome</keyword>
<feature type="chain" id="PRO_0000390921" description="SPbeta prophage-derived uncharacterized protein YopR">
    <location>
        <begin position="1"/>
        <end position="325"/>
    </location>
</feature>
<feature type="helix" evidence="2">
    <location>
        <begin position="4"/>
        <end position="11"/>
    </location>
</feature>
<feature type="helix" evidence="2">
    <location>
        <begin position="16"/>
        <end position="36"/>
    </location>
</feature>
<feature type="helix" evidence="2">
    <location>
        <begin position="40"/>
        <end position="42"/>
    </location>
</feature>
<feature type="helix" evidence="2">
    <location>
        <begin position="45"/>
        <end position="53"/>
    </location>
</feature>
<feature type="helix" evidence="2">
    <location>
        <begin position="60"/>
        <end position="79"/>
    </location>
</feature>
<feature type="strand" evidence="3">
    <location>
        <begin position="83"/>
        <end position="87"/>
    </location>
</feature>
<feature type="helix" evidence="2">
    <location>
        <begin position="89"/>
        <end position="92"/>
    </location>
</feature>
<feature type="helix" evidence="2">
    <location>
        <begin position="95"/>
        <end position="98"/>
    </location>
</feature>
<feature type="helix" evidence="2">
    <location>
        <begin position="99"/>
        <end position="101"/>
    </location>
</feature>
<feature type="turn" evidence="1">
    <location>
        <begin position="103"/>
        <end position="105"/>
    </location>
</feature>
<feature type="helix" evidence="2">
    <location>
        <begin position="111"/>
        <end position="120"/>
    </location>
</feature>
<feature type="helix" evidence="2">
    <location>
        <begin position="124"/>
        <end position="135"/>
    </location>
</feature>
<feature type="helix" evidence="2">
    <location>
        <begin position="140"/>
        <end position="142"/>
    </location>
</feature>
<feature type="helix" evidence="2">
    <location>
        <begin position="143"/>
        <end position="146"/>
    </location>
</feature>
<feature type="helix" evidence="2">
    <location>
        <begin position="150"/>
        <end position="157"/>
    </location>
</feature>
<feature type="turn" evidence="2">
    <location>
        <begin position="158"/>
        <end position="161"/>
    </location>
</feature>
<feature type="strand" evidence="2">
    <location>
        <begin position="162"/>
        <end position="167"/>
    </location>
</feature>
<feature type="turn" evidence="2">
    <location>
        <begin position="168"/>
        <end position="170"/>
    </location>
</feature>
<feature type="strand" evidence="2">
    <location>
        <begin position="171"/>
        <end position="176"/>
    </location>
</feature>
<feature type="helix" evidence="2">
    <location>
        <begin position="179"/>
        <end position="188"/>
    </location>
</feature>
<feature type="strand" evidence="2">
    <location>
        <begin position="193"/>
        <end position="195"/>
    </location>
</feature>
<feature type="helix" evidence="2">
    <location>
        <begin position="196"/>
        <end position="199"/>
    </location>
</feature>
<feature type="strand" evidence="2">
    <location>
        <begin position="207"/>
        <end position="210"/>
    </location>
</feature>
<feature type="strand" evidence="2">
    <location>
        <begin position="213"/>
        <end position="217"/>
    </location>
</feature>
<feature type="helix" evidence="2">
    <location>
        <begin position="221"/>
        <end position="223"/>
    </location>
</feature>
<feature type="helix" evidence="2">
    <location>
        <begin position="232"/>
        <end position="246"/>
    </location>
</feature>
<feature type="helix" evidence="2">
    <location>
        <begin position="253"/>
        <end position="272"/>
    </location>
</feature>
<feature type="helix" evidence="2">
    <location>
        <begin position="277"/>
        <end position="286"/>
    </location>
</feature>
<feature type="helix" evidence="2">
    <location>
        <begin position="294"/>
        <end position="301"/>
    </location>
</feature>
<feature type="turn" evidence="2">
    <location>
        <begin position="302"/>
        <end position="304"/>
    </location>
</feature>
<feature type="helix" evidence="2">
    <location>
        <begin position="307"/>
        <end position="313"/>
    </location>
</feature>
<feature type="helix" evidence="2">
    <location>
        <begin position="315"/>
        <end position="318"/>
    </location>
</feature>
<protein>
    <recommendedName>
        <fullName>SPbeta prophage-derived uncharacterized protein YopR</fullName>
    </recommendedName>
</protein>
<dbReference type="EMBL" id="AL009126">
    <property type="protein sequence ID" value="CAB13971.2"/>
    <property type="molecule type" value="Genomic_DNA"/>
</dbReference>
<dbReference type="RefSeq" id="NP_389961.2">
    <property type="nucleotide sequence ID" value="NC_000964.3"/>
</dbReference>
<dbReference type="RefSeq" id="WP_003231032.1">
    <property type="nucleotide sequence ID" value="NZ_OZ025638.1"/>
</dbReference>
<dbReference type="PDB" id="8A0A">
    <property type="method" value="X-ray"/>
    <property type="resolution" value="2.90 A"/>
    <property type="chains" value="A/B=2-325"/>
</dbReference>
<dbReference type="PDB" id="8BJ6">
    <property type="method" value="X-ray"/>
    <property type="resolution" value="2.60 A"/>
    <property type="chains" value="A/B/C=1-320"/>
</dbReference>
<dbReference type="PDB" id="8BJV">
    <property type="method" value="X-ray"/>
    <property type="resolution" value="2.20 A"/>
    <property type="chains" value="A/B/C=1-325"/>
</dbReference>
<dbReference type="PDB" id="8BPZ">
    <property type="method" value="X-ray"/>
    <property type="resolution" value="2.20 A"/>
    <property type="chains" value="A=1-325"/>
</dbReference>
<dbReference type="PDBsum" id="8A0A"/>
<dbReference type="PDBsum" id="8BJ6"/>
<dbReference type="PDBsum" id="8BJV"/>
<dbReference type="PDBsum" id="8BPZ"/>
<dbReference type="SMR" id="O34558"/>
<dbReference type="FunCoup" id="O34558">
    <property type="interactions" value="13"/>
</dbReference>
<dbReference type="STRING" id="224308.BSU20790"/>
<dbReference type="PaxDb" id="224308-BSU20790"/>
<dbReference type="DNASU" id="936483"/>
<dbReference type="EnsemblBacteria" id="CAB13971">
    <property type="protein sequence ID" value="CAB13971"/>
    <property type="gene ID" value="BSU_20790"/>
</dbReference>
<dbReference type="GeneID" id="936483"/>
<dbReference type="KEGG" id="bsu:BSU20790"/>
<dbReference type="PATRIC" id="fig|224308.179.peg.2269"/>
<dbReference type="eggNOG" id="ENOG50338A8">
    <property type="taxonomic scope" value="Bacteria"/>
</dbReference>
<dbReference type="InParanoid" id="O34558"/>
<dbReference type="OrthoDB" id="2086953at2"/>
<dbReference type="BioCyc" id="BSUB:BSU20790-MONOMER"/>
<dbReference type="Proteomes" id="UP000001570">
    <property type="component" value="Chromosome"/>
</dbReference>
<dbReference type="GO" id="GO:0003677">
    <property type="term" value="F:DNA binding"/>
    <property type="evidence" value="ECO:0007669"/>
    <property type="project" value="InterPro"/>
</dbReference>
<dbReference type="InterPro" id="IPR011010">
    <property type="entry name" value="DNA_brk_join_enz"/>
</dbReference>
<dbReference type="InterPro" id="IPR055008">
    <property type="entry name" value="MrpR_C_cat"/>
</dbReference>
<dbReference type="InterPro" id="IPR055009">
    <property type="entry name" value="MrpR_N_CB"/>
</dbReference>
<dbReference type="Pfam" id="PF22823">
    <property type="entry name" value="MrpR_C_cat"/>
    <property type="match status" value="1"/>
</dbReference>
<dbReference type="Pfam" id="PF22822">
    <property type="entry name" value="MrpR_N_CB"/>
    <property type="match status" value="1"/>
</dbReference>
<dbReference type="SUPFAM" id="SSF56349">
    <property type="entry name" value="DNA breaking-rejoining enzymes"/>
    <property type="match status" value="1"/>
</dbReference>
<sequence length="325" mass="37499">MFNSEIKEKYLDTLSEGMVMQMRPIFAKAEITETLYNKDIYDFTSMQILELIRSFDQTTIGSVRRTLALLSLYIDWAISYKLSKGLTNLARTISEEELYECLGDKKLYITYSELEEMENQLVNYQSKAVLRLLFEGVSGLAHSELLSLTKKQVEDAMLNGNVLTLYDSKHGERKLKVSSECLVIALNAAQETKYKLKNGKAKGQTKEVFLVENDYVVKTKRTSNKGDGQASKFVITNLITDISEFFKINFLTPNTIVRSGHLYRAYQLYKEKGVIDNSVRYQIIDDFNLRVKSKYRAVYSMQDYINEEEVNKYYAEELGLKETTI</sequence>